<evidence type="ECO:0000255" key="1"/>
<evidence type="ECO:0000256" key="2">
    <source>
        <dbReference type="SAM" id="MobiDB-lite"/>
    </source>
</evidence>
<evidence type="ECO:0000269" key="3">
    <source>
    </source>
</evidence>
<evidence type="ECO:0000303" key="4">
    <source>
    </source>
</evidence>
<evidence type="ECO:0000303" key="5">
    <source ref="5"/>
</evidence>
<evidence type="ECO:0000305" key="6"/>
<proteinExistence type="evidence at protein level"/>
<gene>
    <name type="primary">MEB2</name>
    <name type="ordered locus">At5g24290</name>
    <name type="ORF">MOP9.11</name>
</gene>
<reference key="1">
    <citation type="journal article" date="1997" name="DNA Res.">
        <title>Structural analysis of Arabidopsis thaliana chromosome 5. II. Sequence features of the regions of 1,044,062 bp covered by thirteen physically assigned P1 clones.</title>
        <authorList>
            <person name="Kotani H."/>
            <person name="Nakamura Y."/>
            <person name="Sato S."/>
            <person name="Kaneko T."/>
            <person name="Asamizu E."/>
            <person name="Miyajima N."/>
            <person name="Tabata S."/>
        </authorList>
    </citation>
    <scope>NUCLEOTIDE SEQUENCE [LARGE SCALE GENOMIC DNA]</scope>
    <source>
        <strain>cv. Columbia</strain>
    </source>
</reference>
<reference key="2">
    <citation type="journal article" date="2017" name="Plant J.">
        <title>Araport11: a complete reannotation of the Arabidopsis thaliana reference genome.</title>
        <authorList>
            <person name="Cheng C.Y."/>
            <person name="Krishnakumar V."/>
            <person name="Chan A.P."/>
            <person name="Thibaud-Nissen F."/>
            <person name="Schobel S."/>
            <person name="Town C.D."/>
        </authorList>
    </citation>
    <scope>GENOME REANNOTATION</scope>
    <source>
        <strain>cv. Columbia</strain>
    </source>
</reference>
<reference key="3">
    <citation type="submission" date="2002-03" db="EMBL/GenBank/DDBJ databases">
        <title>Full-length cDNA from Arabidopsis thaliana.</title>
        <authorList>
            <person name="Brover V.V."/>
            <person name="Troukhan M.E."/>
            <person name="Alexandrov N.A."/>
            <person name="Lu Y.-P."/>
            <person name="Flavell R.B."/>
            <person name="Feldmann K.A."/>
        </authorList>
    </citation>
    <scope>NUCLEOTIDE SEQUENCE [LARGE SCALE MRNA] (ISOFORM 1)</scope>
</reference>
<reference key="4">
    <citation type="journal article" date="2003" name="Science">
        <title>Empirical analysis of transcriptional activity in the Arabidopsis genome.</title>
        <authorList>
            <person name="Yamada K."/>
            <person name="Lim J."/>
            <person name="Dale J.M."/>
            <person name="Chen H."/>
            <person name="Shinn P."/>
            <person name="Palm C.J."/>
            <person name="Southwick A.M."/>
            <person name="Wu H.C."/>
            <person name="Kim C.J."/>
            <person name="Nguyen M."/>
            <person name="Pham P.K."/>
            <person name="Cheuk R.F."/>
            <person name="Karlin-Newmann G."/>
            <person name="Liu S.X."/>
            <person name="Lam B."/>
            <person name="Sakano H."/>
            <person name="Wu T."/>
            <person name="Yu G."/>
            <person name="Miranda M."/>
            <person name="Quach H.L."/>
            <person name="Tripp M."/>
            <person name="Chang C.H."/>
            <person name="Lee J.M."/>
            <person name="Toriumi M.J."/>
            <person name="Chan M.M."/>
            <person name="Tang C.C."/>
            <person name="Onodera C.S."/>
            <person name="Deng J.M."/>
            <person name="Akiyama K."/>
            <person name="Ansari Y."/>
            <person name="Arakawa T."/>
            <person name="Banh J."/>
            <person name="Banno F."/>
            <person name="Bowser L."/>
            <person name="Brooks S.Y."/>
            <person name="Carninci P."/>
            <person name="Chao Q."/>
            <person name="Choy N."/>
            <person name="Enju A."/>
            <person name="Goldsmith A.D."/>
            <person name="Gurjal M."/>
            <person name="Hansen N.F."/>
            <person name="Hayashizaki Y."/>
            <person name="Johnson-Hopson C."/>
            <person name="Hsuan V.W."/>
            <person name="Iida K."/>
            <person name="Karnes M."/>
            <person name="Khan S."/>
            <person name="Koesema E."/>
            <person name="Ishida J."/>
            <person name="Jiang P.X."/>
            <person name="Jones T."/>
            <person name="Kawai J."/>
            <person name="Kamiya A."/>
            <person name="Meyers C."/>
            <person name="Nakajima M."/>
            <person name="Narusaka M."/>
            <person name="Seki M."/>
            <person name="Sakurai T."/>
            <person name="Satou M."/>
            <person name="Tamse R."/>
            <person name="Vaysberg M."/>
            <person name="Wallender E.K."/>
            <person name="Wong C."/>
            <person name="Yamamura Y."/>
            <person name="Yuan S."/>
            <person name="Shinozaki K."/>
            <person name="Davis R.W."/>
            <person name="Theologis A."/>
            <person name="Ecker J.R."/>
        </authorList>
    </citation>
    <scope>NUCLEOTIDE SEQUENCE [LARGE SCALE MRNA] (ISOFORM 2)</scope>
    <source>
        <strain>cv. Columbia</strain>
    </source>
</reference>
<reference key="5">
    <citation type="submission" date="2006-07" db="EMBL/GenBank/DDBJ databases">
        <title>Large-scale analysis of RIKEN Arabidopsis full-length (RAFL) cDNAs.</title>
        <authorList>
            <person name="Totoki Y."/>
            <person name="Seki M."/>
            <person name="Ishida J."/>
            <person name="Nakajima M."/>
            <person name="Enju A."/>
            <person name="Kamiya A."/>
            <person name="Narusaka M."/>
            <person name="Shin-i T."/>
            <person name="Nakagawa M."/>
            <person name="Sakamoto N."/>
            <person name="Oishi K."/>
            <person name="Kohara Y."/>
            <person name="Kobayashi M."/>
            <person name="Toyoda A."/>
            <person name="Sakaki Y."/>
            <person name="Sakurai T."/>
            <person name="Iida K."/>
            <person name="Akiyama K."/>
            <person name="Satou M."/>
            <person name="Toyoda T."/>
            <person name="Konagaya A."/>
            <person name="Carninci P."/>
            <person name="Kawai J."/>
            <person name="Hayashizaki Y."/>
            <person name="Shinozaki K."/>
        </authorList>
    </citation>
    <scope>NUCLEOTIDE SEQUENCE [LARGE SCALE MRNA] (ISOFORM 2)</scope>
    <source>
        <strain>cv. Columbia</strain>
    </source>
</reference>
<reference key="6">
    <citation type="journal article" date="2009" name="DNA Res.">
        <title>Analysis of multiple occurrences of alternative splicing events in Arabidopsis thaliana using novel sequenced full-length cDNAs.</title>
        <authorList>
            <person name="Iida K."/>
            <person name="Fukami-Kobayashi K."/>
            <person name="Toyoda A."/>
            <person name="Sakaki Y."/>
            <person name="Kobayashi M."/>
            <person name="Seki M."/>
            <person name="Shinozaki K."/>
        </authorList>
    </citation>
    <scope>NUCLEOTIDE SEQUENCE [LARGE SCALE MRNA] (ISOFORM 1)</scope>
    <source>
        <strain>cv. Columbia</strain>
        <tissue>Root</tissue>
    </source>
</reference>
<reference key="7">
    <citation type="journal article" date="2009" name="J. Proteomics">
        <title>Phosphoproteomic analysis of nuclei-enriched fractions from Arabidopsis thaliana.</title>
        <authorList>
            <person name="Jones A.M.E."/>
            <person name="MacLean D."/>
            <person name="Studholme D.J."/>
            <person name="Serna-Sanz A."/>
            <person name="Andreasson E."/>
            <person name="Rathjen J.P."/>
            <person name="Peck S.C."/>
        </authorList>
    </citation>
    <scope>IDENTIFICATION BY MASS SPECTROMETRY [LARGE SCALE ANALYSIS]</scope>
    <source>
        <strain>cv. Columbia</strain>
    </source>
</reference>
<reference key="8">
    <citation type="journal article" date="2013" name="Plant Physiol.">
        <title>Identification of two novel endoplasmic reticulum body-specific integral membrane proteins.</title>
        <authorList>
            <person name="Yamada K."/>
            <person name="Nagano A.J."/>
            <person name="Nishina M."/>
            <person name="Hara-Nishimura I."/>
            <person name="Nishimura M."/>
        </authorList>
    </citation>
    <scope>FUNCTION</scope>
    <scope>SUBCELLULAR LOCATION</scope>
    <scope>INDUCTION</scope>
    <scope>DISRUPTION PHENOTYPE</scope>
    <scope>INTERACTION WITH NAI2</scope>
    <source>
        <strain>cv. Columbia</strain>
    </source>
</reference>
<name>MEB2_ARATH</name>
<organism>
    <name type="scientific">Arabidopsis thaliana</name>
    <name type="common">Mouse-ear cress</name>
    <dbReference type="NCBI Taxonomy" id="3702"/>
    <lineage>
        <taxon>Eukaryota</taxon>
        <taxon>Viridiplantae</taxon>
        <taxon>Streptophyta</taxon>
        <taxon>Embryophyta</taxon>
        <taxon>Tracheophyta</taxon>
        <taxon>Spermatophyta</taxon>
        <taxon>Magnoliopsida</taxon>
        <taxon>eudicotyledons</taxon>
        <taxon>Gunneridae</taxon>
        <taxon>Pentapetalae</taxon>
        <taxon>rosids</taxon>
        <taxon>malvids</taxon>
        <taxon>Brassicales</taxon>
        <taxon>Brassicaceae</taxon>
        <taxon>Camelineae</taxon>
        <taxon>Arabidopsis</taxon>
    </lineage>
</organism>
<keyword id="KW-0025">Alternative splicing</keyword>
<keyword id="KW-0175">Coiled coil</keyword>
<keyword id="KW-0256">Endoplasmic reticulum</keyword>
<keyword id="KW-0472">Membrane</keyword>
<keyword id="KW-1185">Reference proteome</keyword>
<keyword id="KW-0812">Transmembrane</keyword>
<keyword id="KW-1133">Transmembrane helix</keyword>
<sequence>MEKSNQPVHVTLSELKDGDKEIVDAEFLVDLLESYRFGKDNVPAREFRSKAAATAPAPVNTTEIELEEDNDGSQAQGNNSVSESTSSLFSDSDPIVLESTVSETGSNEESETGSNEENGNNWLESSSTNLPNVENKRQRNGEDCEIEEEEENNERSLSDSEEKSNLEKLLGTQENYELGNEDEEKNERSSSDSEEKSNLENLLATQENYELYCPSCSTCITRNVVLKKRKRGKHVNSSLDLKPDIPVVEPDEPSDIEEMESPVKVYVPETRIEDDQEDKEGTIFTCLVCDLKYFIRLGTKFLQLDYIRGKPVEKSVEEYIDVRKSINTTQSPPQIQPDGERFAIELLKSTVYGGLTETITSLGVVSSASASGSSTMNILALAVANLAGGLIVLAQNFQDLRNSSDQEKDRYEELLGRRTKSRIHILVAVMSYIFFGLIPPLVYAFSFYETGIKNYKLISVFLGSLVCVILLGSIKVYVRKPTNSCGSTKAYLKSAAYYTSIVVASCGISYVVGDIMGEYIEKLSLVGLDQISITSPCYGIKPEECRFTSF</sequence>
<dbReference type="EMBL" id="AB006701">
    <property type="protein sequence ID" value="BAB10395.1"/>
    <property type="molecule type" value="Genomic_DNA"/>
</dbReference>
<dbReference type="EMBL" id="CP002688">
    <property type="protein sequence ID" value="AED93280.1"/>
    <property type="molecule type" value="Genomic_DNA"/>
</dbReference>
<dbReference type="EMBL" id="CP002688">
    <property type="protein sequence ID" value="AED93281.1"/>
    <property type="molecule type" value="Genomic_DNA"/>
</dbReference>
<dbReference type="EMBL" id="AY086399">
    <property type="protein sequence ID" value="AAM64466.1"/>
    <property type="molecule type" value="mRNA"/>
</dbReference>
<dbReference type="EMBL" id="BT008326">
    <property type="protein sequence ID" value="AAP37685.1"/>
    <property type="molecule type" value="mRNA"/>
</dbReference>
<dbReference type="EMBL" id="AK228214">
    <property type="protein sequence ID" value="BAF00167.1"/>
    <property type="molecule type" value="mRNA"/>
</dbReference>
<dbReference type="EMBL" id="AK317370">
    <property type="protein sequence ID" value="BAH20042.1"/>
    <property type="molecule type" value="mRNA"/>
</dbReference>
<dbReference type="RefSeq" id="NP_568441.2">
    <molecule id="F4KFS7-2"/>
    <property type="nucleotide sequence ID" value="NM_122335.4"/>
</dbReference>
<dbReference type="RefSeq" id="NP_851067.1">
    <molecule id="F4KFS7-1"/>
    <property type="nucleotide sequence ID" value="NM_180736.3"/>
</dbReference>
<dbReference type="BioGRID" id="17771">
    <property type="interactions" value="3"/>
</dbReference>
<dbReference type="IntAct" id="F4KFS7">
    <property type="interactions" value="3"/>
</dbReference>
<dbReference type="STRING" id="3702.F4KFS7"/>
<dbReference type="iPTMnet" id="F4KFS7"/>
<dbReference type="PaxDb" id="3702-AT5G24290.1"/>
<dbReference type="ProteomicsDB" id="250840">
    <molecule id="F4KFS7-1"/>
</dbReference>
<dbReference type="EnsemblPlants" id="AT5G24290.1">
    <molecule id="F4KFS7-1"/>
    <property type="protein sequence ID" value="AT5G24290.1"/>
    <property type="gene ID" value="AT5G24290"/>
</dbReference>
<dbReference type="EnsemblPlants" id="AT5G24290.2">
    <molecule id="F4KFS7-2"/>
    <property type="protein sequence ID" value="AT5G24290.2"/>
    <property type="gene ID" value="AT5G24290"/>
</dbReference>
<dbReference type="GeneID" id="832496"/>
<dbReference type="Gramene" id="AT5G24290.1">
    <molecule id="F4KFS7-1"/>
    <property type="protein sequence ID" value="AT5G24290.1"/>
    <property type="gene ID" value="AT5G24290"/>
</dbReference>
<dbReference type="Gramene" id="AT5G24290.2">
    <molecule id="F4KFS7-2"/>
    <property type="protein sequence ID" value="AT5G24290.2"/>
    <property type="gene ID" value="AT5G24290"/>
</dbReference>
<dbReference type="KEGG" id="ath:AT5G24290"/>
<dbReference type="Araport" id="AT5G24290"/>
<dbReference type="TAIR" id="AT5G24290">
    <property type="gene designation" value="MEB2"/>
</dbReference>
<dbReference type="eggNOG" id="ENOG502QQ85">
    <property type="taxonomic scope" value="Eukaryota"/>
</dbReference>
<dbReference type="InParanoid" id="F4KFS7"/>
<dbReference type="OMA" id="NFYLHAF"/>
<dbReference type="PRO" id="PR:F4KFS7"/>
<dbReference type="Proteomes" id="UP000006548">
    <property type="component" value="Chromosome 5"/>
</dbReference>
<dbReference type="ExpressionAtlas" id="F4KFS7">
    <property type="expression patterns" value="baseline and differential"/>
</dbReference>
<dbReference type="GO" id="GO:0005789">
    <property type="term" value="C:endoplasmic reticulum membrane"/>
    <property type="evidence" value="ECO:0007669"/>
    <property type="project" value="UniProtKB-SubCell"/>
</dbReference>
<dbReference type="GO" id="GO:0010168">
    <property type="term" value="C:ER body"/>
    <property type="evidence" value="ECO:0000314"/>
    <property type="project" value="TAIR"/>
</dbReference>
<dbReference type="GO" id="GO:0005381">
    <property type="term" value="F:iron ion transmembrane transporter activity"/>
    <property type="evidence" value="ECO:0000316"/>
    <property type="project" value="TAIR"/>
</dbReference>
<dbReference type="GO" id="GO:0005384">
    <property type="term" value="F:manganese ion transmembrane transporter activity"/>
    <property type="evidence" value="ECO:0000316"/>
    <property type="project" value="TAIR"/>
</dbReference>
<dbReference type="InterPro" id="IPR052843">
    <property type="entry name" value="ER_body_metal_sequester"/>
</dbReference>
<dbReference type="PANTHER" id="PTHR38937">
    <property type="entry name" value="MEMBRANE PROTEIN OF ER BODY-LIKE PROTEIN"/>
    <property type="match status" value="1"/>
</dbReference>
<dbReference type="PANTHER" id="PTHR38937:SF2">
    <property type="entry name" value="MEMBRANE PROTEIN OF ER BODY-LIKE PROTEIN ISOFORM X1"/>
    <property type="match status" value="1"/>
</dbReference>
<dbReference type="PROSITE" id="PS01047">
    <property type="entry name" value="HMA_1"/>
    <property type="match status" value="1"/>
</dbReference>
<protein>
    <recommendedName>
        <fullName>Membrane protein of ER body 2</fullName>
    </recommendedName>
</protein>
<accession>F4KFS7</accession>
<accession>B9DH25</accession>
<accession>Q8LCU6</accession>
<accession>Q9FNF3</accession>
<comment type="function">
    <text evidence="3">May sequester excess cytosolic iron and manganese into endoplasmic reticulum to reduce metal ion toxicity. Not essential for the accumulation of ER body components, including PYK10.</text>
</comment>
<comment type="subunit">
    <text evidence="3">Interacts directly or indirectly with NAI2.</text>
</comment>
<comment type="subcellular location">
    <subcellularLocation>
        <location evidence="3">Endoplasmic reticulum membrane</location>
        <topology evidence="3">Multi-pass membrane protein</topology>
    </subcellularLocation>
    <text>Located in ER bodies.</text>
</comment>
<comment type="alternative products">
    <event type="alternative splicing"/>
    <isoform>
        <id>F4KFS7-1</id>
        <name>1</name>
        <sequence type="displayed"/>
    </isoform>
    <isoform>
        <id>F4KFS7-2</id>
        <name>2</name>
        <sequence type="described" ref="VSP_056762"/>
    </isoform>
</comment>
<comment type="induction">
    <text evidence="3">Induced by NAI1.</text>
</comment>
<comment type="disruption phenotype">
    <text evidence="3">No visible phenotype and no effect on pathogen sensitivity.</text>
</comment>
<comment type="similarity">
    <text evidence="6">Belongs to the CCC1 family.</text>
</comment>
<feature type="chain" id="PRO_0000430468" description="Membrane protein of ER body 2">
    <location>
        <begin position="1"/>
        <end position="550"/>
    </location>
</feature>
<feature type="transmembrane region" description="Helical; Name=1" evidence="1">
    <location>
        <begin position="374"/>
        <end position="394"/>
    </location>
</feature>
<feature type="transmembrane region" description="Helical; Name=2" evidence="1">
    <location>
        <begin position="425"/>
        <end position="445"/>
    </location>
</feature>
<feature type="transmembrane region" description="Helical; Name=3" evidence="1">
    <location>
        <begin position="458"/>
        <end position="478"/>
    </location>
</feature>
<feature type="transmembrane region" description="Helical; Name=4" evidence="1">
    <location>
        <begin position="500"/>
        <end position="520"/>
    </location>
</feature>
<feature type="region of interest" description="Disordered" evidence="2">
    <location>
        <begin position="46"/>
        <end position="199"/>
    </location>
</feature>
<feature type="coiled-coil region" evidence="1">
    <location>
        <begin position="134"/>
        <end position="165"/>
    </location>
</feature>
<feature type="coiled-coil region" evidence="1">
    <location>
        <begin position="393"/>
        <end position="418"/>
    </location>
</feature>
<feature type="compositionally biased region" description="Low complexity" evidence="2">
    <location>
        <begin position="80"/>
        <end position="105"/>
    </location>
</feature>
<feature type="compositionally biased region" description="Low complexity" evidence="2">
    <location>
        <begin position="112"/>
        <end position="121"/>
    </location>
</feature>
<feature type="compositionally biased region" description="Polar residues" evidence="2">
    <location>
        <begin position="122"/>
        <end position="132"/>
    </location>
</feature>
<feature type="compositionally biased region" description="Acidic residues" evidence="2">
    <location>
        <begin position="143"/>
        <end position="152"/>
    </location>
</feature>
<feature type="compositionally biased region" description="Basic and acidic residues" evidence="2">
    <location>
        <begin position="153"/>
        <end position="166"/>
    </location>
</feature>
<feature type="compositionally biased region" description="Basic and acidic residues" evidence="2">
    <location>
        <begin position="185"/>
        <end position="198"/>
    </location>
</feature>
<feature type="splice variant" id="VSP_056762" description="In isoform 2." evidence="4 5">
    <location>
        <begin position="77"/>
        <end position="92"/>
    </location>
</feature>
<feature type="sequence conflict" description="In Ref. 6; BAH20042." evidence="6" ref="6">
    <original>D</original>
    <variation>G</variation>
    <location>
        <position position="91"/>
    </location>
</feature>
<feature type="sequence conflict" description="In Ref. 3; AAM64466." evidence="6" ref="3">
    <original>L</original>
    <variation>F</variation>
    <location>
        <position position="202"/>
    </location>
</feature>